<protein>
    <recommendedName>
        <fullName evidence="2">Cytochrome b6-f complex subunit 4</fullName>
    </recommendedName>
    <alternativeName>
        <fullName evidence="2">17 kDa polypeptide</fullName>
    </alternativeName>
</protein>
<name>PETD_PANGI</name>
<geneLocation type="chloroplast"/>
<keyword id="KW-0150">Chloroplast</keyword>
<keyword id="KW-0249">Electron transport</keyword>
<keyword id="KW-0472">Membrane</keyword>
<keyword id="KW-0602">Photosynthesis</keyword>
<keyword id="KW-0934">Plastid</keyword>
<keyword id="KW-0793">Thylakoid</keyword>
<keyword id="KW-0812">Transmembrane</keyword>
<keyword id="KW-1133">Transmembrane helix</keyword>
<keyword id="KW-0813">Transport</keyword>
<gene>
    <name evidence="2" type="primary">petD</name>
    <name type="ORF">PSC0784</name>
</gene>
<dbReference type="EMBL" id="AY582139">
    <property type="protein sequence ID" value="AAT98539.1"/>
    <property type="molecule type" value="Genomic_DNA"/>
</dbReference>
<dbReference type="RefSeq" id="YP_086996.1">
    <property type="nucleotide sequence ID" value="NC_006290.1"/>
</dbReference>
<dbReference type="SMR" id="Q68RX6"/>
<dbReference type="GeneID" id="3021544"/>
<dbReference type="GO" id="GO:0009535">
    <property type="term" value="C:chloroplast thylakoid membrane"/>
    <property type="evidence" value="ECO:0007669"/>
    <property type="project" value="UniProtKB-SubCell"/>
</dbReference>
<dbReference type="GO" id="GO:0045158">
    <property type="term" value="F:electron transporter, transferring electrons within cytochrome b6/f complex of photosystem II activity"/>
    <property type="evidence" value="ECO:0007669"/>
    <property type="project" value="UniProtKB-UniRule"/>
</dbReference>
<dbReference type="GO" id="GO:0045156">
    <property type="term" value="F:electron transporter, transferring electrons within the cyclic electron transport pathway of photosynthesis activity"/>
    <property type="evidence" value="ECO:0007669"/>
    <property type="project" value="InterPro"/>
</dbReference>
<dbReference type="GO" id="GO:0016491">
    <property type="term" value="F:oxidoreductase activity"/>
    <property type="evidence" value="ECO:0007669"/>
    <property type="project" value="InterPro"/>
</dbReference>
<dbReference type="GO" id="GO:0009767">
    <property type="term" value="P:photosynthetic electron transport chain"/>
    <property type="evidence" value="ECO:0007669"/>
    <property type="project" value="InterPro"/>
</dbReference>
<dbReference type="CDD" id="cd00290">
    <property type="entry name" value="cytochrome_b_C"/>
    <property type="match status" value="1"/>
</dbReference>
<dbReference type="FunFam" id="1.10.287.980:FF:000001">
    <property type="entry name" value="Cytochrome b6-f complex subunit 4"/>
    <property type="match status" value="1"/>
</dbReference>
<dbReference type="FunFam" id="1.20.5.510:FF:000002">
    <property type="entry name" value="Cytochrome b6-f complex subunit 4"/>
    <property type="match status" value="1"/>
</dbReference>
<dbReference type="Gene3D" id="1.10.287.980">
    <property type="entry name" value="plastocyanin oxidoreductase"/>
    <property type="match status" value="1"/>
</dbReference>
<dbReference type="Gene3D" id="1.20.5.510">
    <property type="entry name" value="Single helix bin"/>
    <property type="match status" value="1"/>
</dbReference>
<dbReference type="HAMAP" id="MF_01344">
    <property type="entry name" value="Cytb6_f_subIV"/>
    <property type="match status" value="1"/>
</dbReference>
<dbReference type="InterPro" id="IPR005798">
    <property type="entry name" value="Cyt_b/b6_C"/>
</dbReference>
<dbReference type="InterPro" id="IPR036150">
    <property type="entry name" value="Cyt_b/b6_C_sf"/>
</dbReference>
<dbReference type="InterPro" id="IPR005870">
    <property type="entry name" value="Cyt_b6/f_cplx_suIV"/>
</dbReference>
<dbReference type="InterPro" id="IPR048260">
    <property type="entry name" value="Cytochrome_b_C_euk/bac"/>
</dbReference>
<dbReference type="NCBIfam" id="TIGR01156">
    <property type="entry name" value="cytb6_f_IV"/>
    <property type="match status" value="1"/>
</dbReference>
<dbReference type="PANTHER" id="PTHR19271">
    <property type="entry name" value="CYTOCHROME B"/>
    <property type="match status" value="1"/>
</dbReference>
<dbReference type="PANTHER" id="PTHR19271:SF16">
    <property type="entry name" value="CYTOCHROME B"/>
    <property type="match status" value="1"/>
</dbReference>
<dbReference type="Pfam" id="PF00032">
    <property type="entry name" value="Cytochrom_B_C"/>
    <property type="match status" value="1"/>
</dbReference>
<dbReference type="PIRSF" id="PIRSF000033">
    <property type="entry name" value="B6f_17K"/>
    <property type="match status" value="1"/>
</dbReference>
<dbReference type="SUPFAM" id="SSF81648">
    <property type="entry name" value="a domain/subunit of cytochrome bc1 complex (Ubiquinol-cytochrome c reductase)"/>
    <property type="match status" value="1"/>
</dbReference>
<dbReference type="PROSITE" id="PS51003">
    <property type="entry name" value="CYTB_CTER"/>
    <property type="match status" value="1"/>
</dbReference>
<reference key="1">
    <citation type="journal article" date="2004" name="DNA Res.">
        <title>Complete chloroplast genome sequence from Korea ginseng (Panax schinseng Nees) and comparative analysis of sequence evolution among 17 vascular plants.</title>
        <authorList>
            <person name="Kim K.-J."/>
            <person name="Lee H.-L."/>
        </authorList>
    </citation>
    <scope>NUCLEOTIDE SEQUENCE [LARGE SCALE GENOMIC DNA]</scope>
</reference>
<sequence>MGVTKKPDLNDPVLRAKLAKGMGHNYYGEPAWPNDLLYIFPVVILGTIACNVGLAVLEPSMIGEPADPFATPLEILPEWYFFPVFQILRTVPNKLLGVLLMVSVPAGLLTVPFLENVNKFQNPFRRPVATTVFLIGTAVALWLGIGATLPIDKSLTLGLF</sequence>
<evidence type="ECO:0000250" key="1"/>
<evidence type="ECO:0000255" key="2">
    <source>
        <dbReference type="HAMAP-Rule" id="MF_01344"/>
    </source>
</evidence>
<feature type="chain" id="PRO_0000061878" description="Cytochrome b6-f complex subunit 4">
    <location>
        <begin position="1"/>
        <end position="160"/>
    </location>
</feature>
<feature type="transmembrane region" description="Helical" evidence="2">
    <location>
        <begin position="36"/>
        <end position="56"/>
    </location>
</feature>
<feature type="transmembrane region" description="Helical" evidence="2">
    <location>
        <begin position="95"/>
        <end position="115"/>
    </location>
</feature>
<feature type="transmembrane region" description="Helical" evidence="2">
    <location>
        <begin position="131"/>
        <end position="151"/>
    </location>
</feature>
<comment type="function">
    <text evidence="2">Component of the cytochrome b6-f complex, which mediates electron transfer between photosystem II (PSII) and photosystem I (PSI), cyclic electron flow around PSI, and state transitions.</text>
</comment>
<comment type="subunit">
    <text evidence="1">The 4 large subunits of the cytochrome b6-f complex are cytochrome b6, subunit IV (17 kDa polypeptide, petD), cytochrome f and the Rieske protein, while the 4 small subunits are petG, petL, petM and petN. The complex functions as a dimer (By similarity).</text>
</comment>
<comment type="subcellular location">
    <subcellularLocation>
        <location evidence="2">Plastid</location>
        <location evidence="2">Chloroplast thylakoid membrane</location>
        <topology evidence="2">Multi-pass membrane protein</topology>
    </subcellularLocation>
</comment>
<comment type="similarity">
    <text evidence="2">Belongs to the cytochrome b family. PetD subfamily.</text>
</comment>
<accession>Q68RX6</accession>
<organism>
    <name type="scientific">Panax ginseng</name>
    <name type="common">Korean ginseng</name>
    <dbReference type="NCBI Taxonomy" id="4054"/>
    <lineage>
        <taxon>Eukaryota</taxon>
        <taxon>Viridiplantae</taxon>
        <taxon>Streptophyta</taxon>
        <taxon>Embryophyta</taxon>
        <taxon>Tracheophyta</taxon>
        <taxon>Spermatophyta</taxon>
        <taxon>Magnoliopsida</taxon>
        <taxon>eudicotyledons</taxon>
        <taxon>Gunneridae</taxon>
        <taxon>Pentapetalae</taxon>
        <taxon>asterids</taxon>
        <taxon>campanulids</taxon>
        <taxon>Apiales</taxon>
        <taxon>Araliaceae</taxon>
        <taxon>Panax</taxon>
    </lineage>
</organism>
<proteinExistence type="inferred from homology"/>